<organism>
    <name type="scientific">Pseudarthrobacter chlorophenolicus (strain ATCC 700700 / DSM 12829 / CIP 107037 / JCM 12360 / KCTC 9906 / NCIMB 13794 / A6)</name>
    <name type="common">Arthrobacter chlorophenolicus</name>
    <dbReference type="NCBI Taxonomy" id="452863"/>
    <lineage>
        <taxon>Bacteria</taxon>
        <taxon>Bacillati</taxon>
        <taxon>Actinomycetota</taxon>
        <taxon>Actinomycetes</taxon>
        <taxon>Micrococcales</taxon>
        <taxon>Micrococcaceae</taxon>
        <taxon>Pseudarthrobacter</taxon>
    </lineage>
</organism>
<proteinExistence type="inferred from homology"/>
<sequence length="752" mass="80574">MEGPEIQFSEAVIDNGRFGKRVIRFETGRLAKQAAGAAMVYIDEDTALLSATTAGKHPREGFDFFPLTVDVEERMYAAGRIPGSFFRREGRPSTEAILACRLMDRPLRPAFVKGLRNEVQIVVTVLAINPDELYDVVAINASSMSTQLSGLPFSGPIGGVRVALVADENGSQWVAFPKHSQLENSVFNMVVAGRVAGDDVAIMMVEAEATDNSWNLIKEQGATAPTEEVVSEGLEAAKPFIKALCDAQADLAARAAKPTVEFPVFLDYQDDVYAAVEAAAADKLAAVFQIADKQERDTASDALKDEVTSSLAGQFEGREKELSAAFRSVTKHVVRQRILKDQIRIDGRGLTDIRQLTAEVEVLPRVHGSAIFERGETQIMGVTTLNMLKMEQQIDSLSPVTRKRYMHNYNFPPYSTGETGRVGSPKRREIGHGALAERALVPVLPSREEFPYAIRQVSEALGSNGSTSMGSVCASTLSMLNAGVPLKAAVAGIAMGLVSDQVDGQTRYAALTDILGAEDAFGDMDFKVAGTSEFVTAIQLDTKLDGIPASVLAAALKQAREARLHILEVINSAIDTPDELSEFAPRVIAVKIPVDKIGEVIGPKGKMINQIQEDTGADISIEDDGTVYIGATNGPSADAARSAINAIANPQVPEIGERYLGTVVKTTTFGAFVSLTPGKDGLLHISELRKLANGKRVDNVDDVVSVGQKVQVEITKIDDRGKLSLSPVVAEEEGAEGAERAHATEPAEGAEI</sequence>
<keyword id="KW-0963">Cytoplasm</keyword>
<keyword id="KW-0460">Magnesium</keyword>
<keyword id="KW-0479">Metal-binding</keyword>
<keyword id="KW-0548">Nucleotidyltransferase</keyword>
<keyword id="KW-0694">RNA-binding</keyword>
<keyword id="KW-0808">Transferase</keyword>
<name>PNP_PSECP</name>
<gene>
    <name evidence="1" type="primary">pnp</name>
    <name type="ordered locus">Achl_1439</name>
</gene>
<dbReference type="EC" id="2.7.7.8" evidence="1"/>
<dbReference type="EMBL" id="CP001341">
    <property type="protein sequence ID" value="ACL39429.1"/>
    <property type="molecule type" value="Genomic_DNA"/>
</dbReference>
<dbReference type="RefSeq" id="WP_015936652.1">
    <property type="nucleotide sequence ID" value="NC_011886.1"/>
</dbReference>
<dbReference type="SMR" id="B8HG67"/>
<dbReference type="STRING" id="452863.Achl_1439"/>
<dbReference type="KEGG" id="ach:Achl_1439"/>
<dbReference type="eggNOG" id="COG1185">
    <property type="taxonomic scope" value="Bacteria"/>
</dbReference>
<dbReference type="HOGENOM" id="CLU_004217_2_2_11"/>
<dbReference type="OrthoDB" id="9804305at2"/>
<dbReference type="Proteomes" id="UP000002505">
    <property type="component" value="Chromosome"/>
</dbReference>
<dbReference type="GO" id="GO:0005829">
    <property type="term" value="C:cytosol"/>
    <property type="evidence" value="ECO:0007669"/>
    <property type="project" value="TreeGrafter"/>
</dbReference>
<dbReference type="GO" id="GO:0000175">
    <property type="term" value="F:3'-5'-RNA exonuclease activity"/>
    <property type="evidence" value="ECO:0007669"/>
    <property type="project" value="TreeGrafter"/>
</dbReference>
<dbReference type="GO" id="GO:0000287">
    <property type="term" value="F:magnesium ion binding"/>
    <property type="evidence" value="ECO:0007669"/>
    <property type="project" value="UniProtKB-UniRule"/>
</dbReference>
<dbReference type="GO" id="GO:0004654">
    <property type="term" value="F:polyribonucleotide nucleotidyltransferase activity"/>
    <property type="evidence" value="ECO:0007669"/>
    <property type="project" value="UniProtKB-UniRule"/>
</dbReference>
<dbReference type="GO" id="GO:0003723">
    <property type="term" value="F:RNA binding"/>
    <property type="evidence" value="ECO:0007669"/>
    <property type="project" value="UniProtKB-UniRule"/>
</dbReference>
<dbReference type="GO" id="GO:0006402">
    <property type="term" value="P:mRNA catabolic process"/>
    <property type="evidence" value="ECO:0007669"/>
    <property type="project" value="UniProtKB-UniRule"/>
</dbReference>
<dbReference type="GO" id="GO:0006396">
    <property type="term" value="P:RNA processing"/>
    <property type="evidence" value="ECO:0007669"/>
    <property type="project" value="InterPro"/>
</dbReference>
<dbReference type="CDD" id="cd02393">
    <property type="entry name" value="KH-I_PNPase"/>
    <property type="match status" value="1"/>
</dbReference>
<dbReference type="CDD" id="cd11364">
    <property type="entry name" value="RNase_PH_PNPase_2"/>
    <property type="match status" value="1"/>
</dbReference>
<dbReference type="FunFam" id="2.40.50.140:FF:000069">
    <property type="entry name" value="Polyribonucleotide nucleotidyltransferase"/>
    <property type="match status" value="1"/>
</dbReference>
<dbReference type="FunFam" id="3.30.1370.10:FF:000001">
    <property type="entry name" value="Polyribonucleotide nucleotidyltransferase"/>
    <property type="match status" value="1"/>
</dbReference>
<dbReference type="FunFam" id="3.30.230.70:FF:000001">
    <property type="entry name" value="Polyribonucleotide nucleotidyltransferase"/>
    <property type="match status" value="1"/>
</dbReference>
<dbReference type="FunFam" id="3.30.230.70:FF:000002">
    <property type="entry name" value="Polyribonucleotide nucleotidyltransferase"/>
    <property type="match status" value="1"/>
</dbReference>
<dbReference type="Gene3D" id="3.30.230.70">
    <property type="entry name" value="GHMP Kinase, N-terminal domain"/>
    <property type="match status" value="2"/>
</dbReference>
<dbReference type="Gene3D" id="3.30.1370.10">
    <property type="entry name" value="K Homology domain, type 1"/>
    <property type="match status" value="1"/>
</dbReference>
<dbReference type="Gene3D" id="2.40.50.140">
    <property type="entry name" value="Nucleic acid-binding proteins"/>
    <property type="match status" value="1"/>
</dbReference>
<dbReference type="HAMAP" id="MF_01595">
    <property type="entry name" value="PNPase"/>
    <property type="match status" value="1"/>
</dbReference>
<dbReference type="InterPro" id="IPR001247">
    <property type="entry name" value="ExoRNase_PH_dom1"/>
</dbReference>
<dbReference type="InterPro" id="IPR036345">
    <property type="entry name" value="ExoRNase_PH_dom2_sf"/>
</dbReference>
<dbReference type="InterPro" id="IPR014069">
    <property type="entry name" value="GPSI/PNP"/>
</dbReference>
<dbReference type="InterPro" id="IPR004087">
    <property type="entry name" value="KH_dom"/>
</dbReference>
<dbReference type="InterPro" id="IPR004088">
    <property type="entry name" value="KH_dom_type_1"/>
</dbReference>
<dbReference type="InterPro" id="IPR036612">
    <property type="entry name" value="KH_dom_type_1_sf"/>
</dbReference>
<dbReference type="InterPro" id="IPR012340">
    <property type="entry name" value="NA-bd_OB-fold"/>
</dbReference>
<dbReference type="InterPro" id="IPR012162">
    <property type="entry name" value="PNPase"/>
</dbReference>
<dbReference type="InterPro" id="IPR027408">
    <property type="entry name" value="PNPase/RNase_PH_dom_sf"/>
</dbReference>
<dbReference type="InterPro" id="IPR015848">
    <property type="entry name" value="PNPase_PH_RNA-bd_bac/org-type"/>
</dbReference>
<dbReference type="InterPro" id="IPR036456">
    <property type="entry name" value="PNPase_PH_RNA-bd_sf"/>
</dbReference>
<dbReference type="InterPro" id="IPR020568">
    <property type="entry name" value="Ribosomal_Su5_D2-typ_SF"/>
</dbReference>
<dbReference type="InterPro" id="IPR003029">
    <property type="entry name" value="S1_domain"/>
</dbReference>
<dbReference type="NCBIfam" id="TIGR03591">
    <property type="entry name" value="polynuc_phos"/>
    <property type="match status" value="1"/>
</dbReference>
<dbReference type="NCBIfam" id="TIGR02696">
    <property type="entry name" value="pppGpp_PNP"/>
    <property type="match status" value="1"/>
</dbReference>
<dbReference type="NCBIfam" id="NF008805">
    <property type="entry name" value="PRK11824.1"/>
    <property type="match status" value="1"/>
</dbReference>
<dbReference type="PANTHER" id="PTHR11252">
    <property type="entry name" value="POLYRIBONUCLEOTIDE NUCLEOTIDYLTRANSFERASE"/>
    <property type="match status" value="1"/>
</dbReference>
<dbReference type="PANTHER" id="PTHR11252:SF0">
    <property type="entry name" value="POLYRIBONUCLEOTIDE NUCLEOTIDYLTRANSFERASE 1, MITOCHONDRIAL"/>
    <property type="match status" value="1"/>
</dbReference>
<dbReference type="Pfam" id="PF00013">
    <property type="entry name" value="KH_1"/>
    <property type="match status" value="1"/>
</dbReference>
<dbReference type="Pfam" id="PF03726">
    <property type="entry name" value="PNPase"/>
    <property type="match status" value="1"/>
</dbReference>
<dbReference type="Pfam" id="PF01138">
    <property type="entry name" value="RNase_PH"/>
    <property type="match status" value="2"/>
</dbReference>
<dbReference type="Pfam" id="PF00575">
    <property type="entry name" value="S1"/>
    <property type="match status" value="1"/>
</dbReference>
<dbReference type="PIRSF" id="PIRSF005499">
    <property type="entry name" value="PNPase"/>
    <property type="match status" value="1"/>
</dbReference>
<dbReference type="SMART" id="SM00322">
    <property type="entry name" value="KH"/>
    <property type="match status" value="1"/>
</dbReference>
<dbReference type="SMART" id="SM00316">
    <property type="entry name" value="S1"/>
    <property type="match status" value="1"/>
</dbReference>
<dbReference type="SUPFAM" id="SSF54791">
    <property type="entry name" value="Eukaryotic type KH-domain (KH-domain type I)"/>
    <property type="match status" value="1"/>
</dbReference>
<dbReference type="SUPFAM" id="SSF50249">
    <property type="entry name" value="Nucleic acid-binding proteins"/>
    <property type="match status" value="1"/>
</dbReference>
<dbReference type="SUPFAM" id="SSF46915">
    <property type="entry name" value="Polynucleotide phosphorylase/guanosine pentaphosphate synthase (PNPase/GPSI), domain 3"/>
    <property type="match status" value="1"/>
</dbReference>
<dbReference type="SUPFAM" id="SSF55666">
    <property type="entry name" value="Ribonuclease PH domain 2-like"/>
    <property type="match status" value="2"/>
</dbReference>
<dbReference type="SUPFAM" id="SSF54211">
    <property type="entry name" value="Ribosomal protein S5 domain 2-like"/>
    <property type="match status" value="2"/>
</dbReference>
<dbReference type="PROSITE" id="PS50084">
    <property type="entry name" value="KH_TYPE_1"/>
    <property type="match status" value="1"/>
</dbReference>
<dbReference type="PROSITE" id="PS50126">
    <property type="entry name" value="S1"/>
    <property type="match status" value="1"/>
</dbReference>
<feature type="chain" id="PRO_1000185718" description="Polyribonucleotide nucleotidyltransferase">
    <location>
        <begin position="1"/>
        <end position="752"/>
    </location>
</feature>
<feature type="domain" description="KH" evidence="1">
    <location>
        <begin position="585"/>
        <end position="644"/>
    </location>
</feature>
<feature type="domain" description="S1 motif" evidence="1">
    <location>
        <begin position="656"/>
        <end position="728"/>
    </location>
</feature>
<feature type="region of interest" description="Disordered" evidence="2">
    <location>
        <begin position="727"/>
        <end position="752"/>
    </location>
</feature>
<feature type="binding site" evidence="1">
    <location>
        <position position="519"/>
    </location>
    <ligand>
        <name>Mg(2+)</name>
        <dbReference type="ChEBI" id="CHEBI:18420"/>
    </ligand>
</feature>
<feature type="binding site" evidence="1">
    <location>
        <position position="525"/>
    </location>
    <ligand>
        <name>Mg(2+)</name>
        <dbReference type="ChEBI" id="CHEBI:18420"/>
    </ligand>
</feature>
<accession>B8HG67</accession>
<evidence type="ECO:0000255" key="1">
    <source>
        <dbReference type="HAMAP-Rule" id="MF_01595"/>
    </source>
</evidence>
<evidence type="ECO:0000256" key="2">
    <source>
        <dbReference type="SAM" id="MobiDB-lite"/>
    </source>
</evidence>
<comment type="function">
    <text evidence="1">Involved in mRNA degradation. Catalyzes the phosphorolysis of single-stranded polyribonucleotides processively in the 3'- to 5'-direction.</text>
</comment>
<comment type="catalytic activity">
    <reaction evidence="1">
        <text>RNA(n+1) + phosphate = RNA(n) + a ribonucleoside 5'-diphosphate</text>
        <dbReference type="Rhea" id="RHEA:22096"/>
        <dbReference type="Rhea" id="RHEA-COMP:14527"/>
        <dbReference type="Rhea" id="RHEA-COMP:17342"/>
        <dbReference type="ChEBI" id="CHEBI:43474"/>
        <dbReference type="ChEBI" id="CHEBI:57930"/>
        <dbReference type="ChEBI" id="CHEBI:140395"/>
        <dbReference type="EC" id="2.7.7.8"/>
    </reaction>
</comment>
<comment type="cofactor">
    <cofactor evidence="1">
        <name>Mg(2+)</name>
        <dbReference type="ChEBI" id="CHEBI:18420"/>
    </cofactor>
</comment>
<comment type="subcellular location">
    <subcellularLocation>
        <location evidence="1">Cytoplasm</location>
    </subcellularLocation>
</comment>
<comment type="similarity">
    <text evidence="1">Belongs to the polyribonucleotide nucleotidyltransferase family.</text>
</comment>
<reference key="1">
    <citation type="submission" date="2009-01" db="EMBL/GenBank/DDBJ databases">
        <title>Complete sequence of chromosome of Arthrobacter chlorophenolicus A6.</title>
        <authorList>
            <consortium name="US DOE Joint Genome Institute"/>
            <person name="Lucas S."/>
            <person name="Copeland A."/>
            <person name="Lapidus A."/>
            <person name="Glavina del Rio T."/>
            <person name="Tice H."/>
            <person name="Bruce D."/>
            <person name="Goodwin L."/>
            <person name="Pitluck S."/>
            <person name="Goltsman E."/>
            <person name="Clum A."/>
            <person name="Larimer F."/>
            <person name="Land M."/>
            <person name="Hauser L."/>
            <person name="Kyrpides N."/>
            <person name="Mikhailova N."/>
            <person name="Jansson J."/>
            <person name="Richardson P."/>
        </authorList>
    </citation>
    <scope>NUCLEOTIDE SEQUENCE [LARGE SCALE GENOMIC DNA]</scope>
    <source>
        <strain>ATCC 700700 / DSM 12829 / CIP 107037 / JCM 12360 / KCTC 9906 / NCIMB 13794 / A6</strain>
    </source>
</reference>
<protein>
    <recommendedName>
        <fullName evidence="1">Polyribonucleotide nucleotidyltransferase</fullName>
        <ecNumber evidence="1">2.7.7.8</ecNumber>
    </recommendedName>
    <alternativeName>
        <fullName evidence="1">Polynucleotide phosphorylase</fullName>
        <shortName evidence="1">PNPase</shortName>
    </alternativeName>
</protein>